<gene>
    <name type="primary">dns</name>
</gene>
<evidence type="ECO:0000255" key="1"/>
<evidence type="ECO:0000305" key="2"/>
<name>DRNE_AERHY</name>
<keyword id="KW-0255">Endonuclease</keyword>
<keyword id="KW-0378">Hydrolase</keyword>
<keyword id="KW-0540">Nuclease</keyword>
<keyword id="KW-0964">Secreted</keyword>
<keyword id="KW-0732">Signal</keyword>
<comment type="subcellular location">
    <subcellularLocation>
        <location>Secreted</location>
    </subcellularLocation>
</comment>
<comment type="similarity">
    <text evidence="2">Belongs to the EndA/NucM nuclease family.</text>
</comment>
<reference key="1">
    <citation type="journal article" date="1992" name="Gene">
        <title>Cloning and expression in Escherichia coli of the gene encoding an extracellular deoxyribonuclease (DNase) from Aeromonas hydrophila.</title>
        <authorList>
            <person name="Chang M.C."/>
            <person name="Chang S.Y."/>
            <person name="Chen S.L."/>
            <person name="Chuang S.M."/>
        </authorList>
    </citation>
    <scope>NUCLEOTIDE SEQUENCE [GENOMIC DNA]</scope>
    <source>
        <strain>CHC-1</strain>
    </source>
</reference>
<accession>P39658</accession>
<sequence length="230" mass="26699">MFRPLLSLCLALLVSAPAHADNIQTFRAAKQDLNKLYQSHPVTFYCGCNIKFSGKKMAPDWESCGYLPGKQAERASRIEWEHVVPAWEFGHQLQCWQDGGRKNCGKSDEFNRMEGDMHNLFPAIGEVNGDRANFRFSDWNGKPNQYGKCQMLVDFKERQVQPPKGPVRGQIARAYLYMSQQYGLRLAAQQRKLYEAWDRQYPADRWECERNRRIGKLQGNTNPFIEKQCQ</sequence>
<protein>
    <recommendedName>
        <fullName>Extracellular deoxyribonuclease</fullName>
        <shortName>DNase</shortName>
        <ecNumber>3.1.21.-</ecNumber>
    </recommendedName>
</protein>
<feature type="signal peptide" evidence="1">
    <location>
        <begin position="1"/>
        <end position="20"/>
    </location>
</feature>
<feature type="chain" id="PRO_0000007830" description="Extracellular deoxyribonuclease">
    <location>
        <begin position="21"/>
        <end position="230"/>
    </location>
</feature>
<dbReference type="EC" id="3.1.21.-"/>
<dbReference type="EMBL" id="M99491">
    <property type="protein sequence ID" value="AAA21942.1"/>
    <property type="molecule type" value="Genomic_DNA"/>
</dbReference>
<dbReference type="PIR" id="JC1483">
    <property type="entry name" value="JC1483"/>
</dbReference>
<dbReference type="SMR" id="P39658"/>
<dbReference type="GO" id="GO:0005576">
    <property type="term" value="C:extracellular region"/>
    <property type="evidence" value="ECO:0007669"/>
    <property type="project" value="UniProtKB-SubCell"/>
</dbReference>
<dbReference type="GO" id="GO:0004519">
    <property type="term" value="F:endonuclease activity"/>
    <property type="evidence" value="ECO:0007669"/>
    <property type="project" value="UniProtKB-KW"/>
</dbReference>
<dbReference type="InterPro" id="IPR007346">
    <property type="entry name" value="Endonuclease-I"/>
</dbReference>
<dbReference type="InterPro" id="IPR044925">
    <property type="entry name" value="His-Me_finger_sf"/>
</dbReference>
<dbReference type="PANTHER" id="PTHR33607">
    <property type="entry name" value="ENDONUCLEASE-1"/>
    <property type="match status" value="1"/>
</dbReference>
<dbReference type="PANTHER" id="PTHR33607:SF2">
    <property type="entry name" value="ENDONUCLEASE-1"/>
    <property type="match status" value="1"/>
</dbReference>
<dbReference type="Pfam" id="PF04231">
    <property type="entry name" value="Endonuclease_1"/>
    <property type="match status" value="1"/>
</dbReference>
<dbReference type="SUPFAM" id="SSF54060">
    <property type="entry name" value="His-Me finger endonucleases"/>
    <property type="match status" value="1"/>
</dbReference>
<proteinExistence type="inferred from homology"/>
<organism>
    <name type="scientific">Aeromonas hydrophila</name>
    <dbReference type="NCBI Taxonomy" id="644"/>
    <lineage>
        <taxon>Bacteria</taxon>
        <taxon>Pseudomonadati</taxon>
        <taxon>Pseudomonadota</taxon>
        <taxon>Gammaproteobacteria</taxon>
        <taxon>Aeromonadales</taxon>
        <taxon>Aeromonadaceae</taxon>
        <taxon>Aeromonas</taxon>
    </lineage>
</organism>